<keyword id="KW-0687">Ribonucleoprotein</keyword>
<keyword id="KW-0689">Ribosomal protein</keyword>
<keyword id="KW-0694">RNA-binding</keyword>
<keyword id="KW-0699">rRNA-binding</keyword>
<comment type="function">
    <text evidence="1">This protein binds specifically to 23S rRNA; its binding is stimulated by other ribosomal proteins, e.g. L4, L17, and L20. It is important during the early stages of 50S assembly. It makes multiple contacts with different domains of the 23S rRNA in the assembled 50S subunit and ribosome (By similarity).</text>
</comment>
<comment type="function">
    <text evidence="1">The globular domain of the protein is located near the polypeptide exit tunnel on the outside of the subunit, while an extended beta-hairpin is found that lines the wall of the exit tunnel in the center of the 70S ribosome.</text>
</comment>
<comment type="subunit">
    <text evidence="1">Part of the 50S ribosomal subunit.</text>
</comment>
<comment type="similarity">
    <text evidence="1">Belongs to the universal ribosomal protein uL22 family.</text>
</comment>
<reference key="1">
    <citation type="journal article" date="2004" name="Nat. Genet.">
        <title>Evidence in the Legionella pneumophila genome for exploitation of host cell functions and high genome plasticity.</title>
        <authorList>
            <person name="Cazalet C."/>
            <person name="Rusniok C."/>
            <person name="Brueggemann H."/>
            <person name="Zidane N."/>
            <person name="Magnier A."/>
            <person name="Ma L."/>
            <person name="Tichit M."/>
            <person name="Jarraud S."/>
            <person name="Bouchier C."/>
            <person name="Vandenesch F."/>
            <person name="Kunst F."/>
            <person name="Etienne J."/>
            <person name="Glaser P."/>
            <person name="Buchrieser C."/>
        </authorList>
    </citation>
    <scope>NUCLEOTIDE SEQUENCE [LARGE SCALE GENOMIC DNA]</scope>
    <source>
        <strain>Lens</strain>
    </source>
</reference>
<organism>
    <name type="scientific">Legionella pneumophila (strain Lens)</name>
    <dbReference type="NCBI Taxonomy" id="297245"/>
    <lineage>
        <taxon>Bacteria</taxon>
        <taxon>Pseudomonadati</taxon>
        <taxon>Pseudomonadota</taxon>
        <taxon>Gammaproteobacteria</taxon>
        <taxon>Legionellales</taxon>
        <taxon>Legionellaceae</taxon>
        <taxon>Legionella</taxon>
    </lineage>
</organism>
<sequence>MEVTAKLKGAPLSAQKGRLVADMIRNMNVSGALDVLKFTPKKGAKLMLKLLESAIANAENNNGADIDDLKVGMVCVDEATTLKRISPRAKGRANRICKRTCHITIKVSDEE</sequence>
<gene>
    <name evidence="1" type="primary">rplV</name>
    <name type="ordered locus">lpl0374</name>
</gene>
<name>RL22_LEGPL</name>
<dbReference type="EMBL" id="CR628337">
    <property type="protein sequence ID" value="CAH14605.1"/>
    <property type="molecule type" value="Genomic_DNA"/>
</dbReference>
<dbReference type="RefSeq" id="WP_010946083.1">
    <property type="nucleotide sequence ID" value="NC_006369.1"/>
</dbReference>
<dbReference type="SMR" id="Q5WZK7"/>
<dbReference type="GeneID" id="57034337"/>
<dbReference type="KEGG" id="lpf:lpl0374"/>
<dbReference type="LegioList" id="lpl0374"/>
<dbReference type="HOGENOM" id="CLU_083987_3_3_6"/>
<dbReference type="Proteomes" id="UP000002517">
    <property type="component" value="Chromosome"/>
</dbReference>
<dbReference type="GO" id="GO:0022625">
    <property type="term" value="C:cytosolic large ribosomal subunit"/>
    <property type="evidence" value="ECO:0007669"/>
    <property type="project" value="TreeGrafter"/>
</dbReference>
<dbReference type="GO" id="GO:0019843">
    <property type="term" value="F:rRNA binding"/>
    <property type="evidence" value="ECO:0007669"/>
    <property type="project" value="UniProtKB-UniRule"/>
</dbReference>
<dbReference type="GO" id="GO:0003735">
    <property type="term" value="F:structural constituent of ribosome"/>
    <property type="evidence" value="ECO:0007669"/>
    <property type="project" value="InterPro"/>
</dbReference>
<dbReference type="GO" id="GO:0006412">
    <property type="term" value="P:translation"/>
    <property type="evidence" value="ECO:0007669"/>
    <property type="project" value="UniProtKB-UniRule"/>
</dbReference>
<dbReference type="CDD" id="cd00336">
    <property type="entry name" value="Ribosomal_L22"/>
    <property type="match status" value="1"/>
</dbReference>
<dbReference type="Gene3D" id="3.90.470.10">
    <property type="entry name" value="Ribosomal protein L22/L17"/>
    <property type="match status" value="1"/>
</dbReference>
<dbReference type="HAMAP" id="MF_01331_B">
    <property type="entry name" value="Ribosomal_uL22_B"/>
    <property type="match status" value="1"/>
</dbReference>
<dbReference type="InterPro" id="IPR001063">
    <property type="entry name" value="Ribosomal_uL22"/>
</dbReference>
<dbReference type="InterPro" id="IPR005727">
    <property type="entry name" value="Ribosomal_uL22_bac/chlpt-type"/>
</dbReference>
<dbReference type="InterPro" id="IPR047867">
    <property type="entry name" value="Ribosomal_uL22_bac/org-type"/>
</dbReference>
<dbReference type="InterPro" id="IPR018260">
    <property type="entry name" value="Ribosomal_uL22_CS"/>
</dbReference>
<dbReference type="InterPro" id="IPR036394">
    <property type="entry name" value="Ribosomal_uL22_sf"/>
</dbReference>
<dbReference type="NCBIfam" id="TIGR01044">
    <property type="entry name" value="rplV_bact"/>
    <property type="match status" value="1"/>
</dbReference>
<dbReference type="PANTHER" id="PTHR13501">
    <property type="entry name" value="CHLOROPLAST 50S RIBOSOMAL PROTEIN L22-RELATED"/>
    <property type="match status" value="1"/>
</dbReference>
<dbReference type="PANTHER" id="PTHR13501:SF8">
    <property type="entry name" value="LARGE RIBOSOMAL SUBUNIT PROTEIN UL22M"/>
    <property type="match status" value="1"/>
</dbReference>
<dbReference type="Pfam" id="PF00237">
    <property type="entry name" value="Ribosomal_L22"/>
    <property type="match status" value="1"/>
</dbReference>
<dbReference type="SUPFAM" id="SSF54843">
    <property type="entry name" value="Ribosomal protein L22"/>
    <property type="match status" value="1"/>
</dbReference>
<dbReference type="PROSITE" id="PS00464">
    <property type="entry name" value="RIBOSOMAL_L22"/>
    <property type="match status" value="1"/>
</dbReference>
<proteinExistence type="inferred from homology"/>
<evidence type="ECO:0000255" key="1">
    <source>
        <dbReference type="HAMAP-Rule" id="MF_01331"/>
    </source>
</evidence>
<evidence type="ECO:0000305" key="2"/>
<feature type="chain" id="PRO_0000243161" description="Large ribosomal subunit protein uL22">
    <location>
        <begin position="1"/>
        <end position="111"/>
    </location>
</feature>
<protein>
    <recommendedName>
        <fullName evidence="1">Large ribosomal subunit protein uL22</fullName>
    </recommendedName>
    <alternativeName>
        <fullName evidence="2">50S ribosomal protein L22</fullName>
    </alternativeName>
</protein>
<accession>Q5WZK7</accession>